<gene>
    <name type="primary">cpa-1</name>
    <name type="ORF">AN2243</name>
</gene>
<sequence length="454" mass="49638">MMFSRFFKAVPARAPAFSSPLPVYQARTMATVRNQRPVERATFTIRDGPIFHGKSFGARTTISGEAVFTTSLVGYPESLTDPSYRGQILVFTQPLIGNYGVPSTERDRHGLLKYFESPNLQAAGVVVADVAEQYSHWTAVQSLGEWCAREGVPAISGVDTRAIVTYLREQGSSLARITVGEEYDADQDEAFTDPEQIHLVRQVSTKAPFHVSAADPQCHVAVLDCGVKENILRSLVSRGASITVFPFDYPIHKVAHHFDGVFISNGPGDPTHCQDTTYHLRRLMETSQVPIFGICLGHQLLALAAGARTVKLKYGNRAHNIPALDLTTGRCHITSQNHGYAVDASTLPSDWKPYFVNLNDSSNEGMIHKSRPIFSTQFHPEAKGGPLDSSYLFDIYIDSVKKYKNSQLAFHPSRETIPSPLLVDLLPKERVDVAPTIGMQNVAAAAAAAAAATA</sequence>
<evidence type="ECO:0000250" key="1">
    <source>
        <dbReference type="UniProtKB" id="P22572"/>
    </source>
</evidence>
<evidence type="ECO:0000255" key="2"/>
<evidence type="ECO:0000255" key="3">
    <source>
        <dbReference type="PROSITE-ProRule" id="PRU00605"/>
    </source>
</evidence>
<evidence type="ECO:0000305" key="4"/>
<proteinExistence type="evidence at transcript level"/>
<protein>
    <recommendedName>
        <fullName>Carbamoyl phosphate synthase arginine-specific small chain</fullName>
        <shortName>CPS</shortName>
        <shortName>CPSase</shortName>
        <ecNumber evidence="1">6.3.5.5</ecNumber>
    </recommendedName>
    <alternativeName>
        <fullName>Arginine-specific carbamoyl phosphate synthetase, glutamine chain</fullName>
    </alternativeName>
    <alternativeName>
        <fullName>Glutamine-dependent carbamoyl phosphate synthetase</fullName>
    </alternativeName>
</protein>
<keyword id="KW-0028">Amino-acid biosynthesis</keyword>
<keyword id="KW-0055">Arginine biosynthesis</keyword>
<keyword id="KW-0067">ATP-binding</keyword>
<keyword id="KW-0315">Glutamine amidotransferase</keyword>
<keyword id="KW-0436">Ligase</keyword>
<keyword id="KW-0496">Mitochondrion</keyword>
<keyword id="KW-0547">Nucleotide-binding</keyword>
<keyword id="KW-1185">Reference proteome</keyword>
<keyword id="KW-0809">Transit peptide</keyword>
<name>CARA_EMENI</name>
<dbReference type="EC" id="6.3.5.5" evidence="1"/>
<dbReference type="EMBL" id="AACD01000036">
    <property type="protein sequence ID" value="EAA63928.1"/>
    <property type="status" value="ALT_SEQ"/>
    <property type="molecule type" value="Genomic_DNA"/>
</dbReference>
<dbReference type="EMBL" id="BN001307">
    <property type="protein sequence ID" value="CBF86449.1"/>
    <property type="molecule type" value="Genomic_DNA"/>
</dbReference>
<dbReference type="EMBL" id="AJ224085">
    <property type="protein sequence ID" value="CAA11831.1"/>
    <property type="molecule type" value="mRNA"/>
</dbReference>
<dbReference type="RefSeq" id="XP_659847.1">
    <property type="nucleotide sequence ID" value="XM_654755.1"/>
</dbReference>
<dbReference type="SMR" id="Q5BB37"/>
<dbReference type="FunCoup" id="Q5BB37">
    <property type="interactions" value="350"/>
</dbReference>
<dbReference type="STRING" id="227321.Q5BB37"/>
<dbReference type="EnsemblFungi" id="CBF86449">
    <property type="protein sequence ID" value="CBF86449"/>
    <property type="gene ID" value="ANIA_02243"/>
</dbReference>
<dbReference type="VEuPathDB" id="FungiDB:AN2243"/>
<dbReference type="eggNOG" id="KOG0370">
    <property type="taxonomic scope" value="Eukaryota"/>
</dbReference>
<dbReference type="HOGENOM" id="CLU_035901_1_0_1"/>
<dbReference type="InParanoid" id="Q5BB37"/>
<dbReference type="OMA" id="CFSVQYH"/>
<dbReference type="OrthoDB" id="434at2759"/>
<dbReference type="UniPathway" id="UPA00068">
    <property type="reaction ID" value="UER00171"/>
</dbReference>
<dbReference type="Proteomes" id="UP000000560">
    <property type="component" value="Chromosome VII"/>
</dbReference>
<dbReference type="GO" id="GO:0005951">
    <property type="term" value="C:carbamoyl-phosphate synthase complex"/>
    <property type="evidence" value="ECO:0000318"/>
    <property type="project" value="GO_Central"/>
</dbReference>
<dbReference type="GO" id="GO:0005737">
    <property type="term" value="C:cytoplasm"/>
    <property type="evidence" value="ECO:0000318"/>
    <property type="project" value="GO_Central"/>
</dbReference>
<dbReference type="GO" id="GO:0005759">
    <property type="term" value="C:mitochondrial matrix"/>
    <property type="evidence" value="ECO:0007669"/>
    <property type="project" value="UniProtKB-SubCell"/>
</dbReference>
<dbReference type="GO" id="GO:0005524">
    <property type="term" value="F:ATP binding"/>
    <property type="evidence" value="ECO:0007669"/>
    <property type="project" value="UniProtKB-KW"/>
</dbReference>
<dbReference type="GO" id="GO:0004088">
    <property type="term" value="F:carbamoyl-phosphate synthase (glutamine-hydrolyzing) activity"/>
    <property type="evidence" value="ECO:0007669"/>
    <property type="project" value="UniProtKB-EC"/>
</dbReference>
<dbReference type="GO" id="GO:0004359">
    <property type="term" value="F:glutaminase activity"/>
    <property type="evidence" value="ECO:0007669"/>
    <property type="project" value="RHEA"/>
</dbReference>
<dbReference type="GO" id="GO:0006207">
    <property type="term" value="P:'de novo' pyrimidine nucleobase biosynthetic process"/>
    <property type="evidence" value="ECO:0007669"/>
    <property type="project" value="InterPro"/>
</dbReference>
<dbReference type="GO" id="GO:0006541">
    <property type="term" value="P:glutamine metabolic process"/>
    <property type="evidence" value="ECO:0007669"/>
    <property type="project" value="InterPro"/>
</dbReference>
<dbReference type="GO" id="GO:0006526">
    <property type="term" value="P:L-arginine biosynthetic process"/>
    <property type="evidence" value="ECO:0000318"/>
    <property type="project" value="GO_Central"/>
</dbReference>
<dbReference type="GO" id="GO:0006221">
    <property type="term" value="P:pyrimidine nucleotide biosynthetic process"/>
    <property type="evidence" value="ECO:0007669"/>
    <property type="project" value="EnsemblFungi"/>
</dbReference>
<dbReference type="CDD" id="cd01744">
    <property type="entry name" value="GATase1_CPSase"/>
    <property type="match status" value="1"/>
</dbReference>
<dbReference type="FunFam" id="3.40.50.880:FF:000016">
    <property type="entry name" value="Carbamoyl-phosphate synthase arginine-specific small chain"/>
    <property type="match status" value="1"/>
</dbReference>
<dbReference type="FunFam" id="3.50.30.20:FF:000003">
    <property type="entry name" value="Carbamoyl-phosphate synthase arginine-specific small chain"/>
    <property type="match status" value="1"/>
</dbReference>
<dbReference type="Gene3D" id="3.40.50.880">
    <property type="match status" value="1"/>
</dbReference>
<dbReference type="Gene3D" id="3.50.30.20">
    <property type="entry name" value="Carbamoyl-phosphate synthase small subunit, N-terminal domain"/>
    <property type="match status" value="1"/>
</dbReference>
<dbReference type="HAMAP" id="MF_01209">
    <property type="entry name" value="CPSase_S_chain"/>
    <property type="match status" value="1"/>
</dbReference>
<dbReference type="InterPro" id="IPR006274">
    <property type="entry name" value="CarbamoylP_synth_ssu"/>
</dbReference>
<dbReference type="InterPro" id="IPR002474">
    <property type="entry name" value="CarbamoylP_synth_ssu_N"/>
</dbReference>
<dbReference type="InterPro" id="IPR036480">
    <property type="entry name" value="CarbP_synth_ssu_N_sf"/>
</dbReference>
<dbReference type="InterPro" id="IPR029062">
    <property type="entry name" value="Class_I_gatase-like"/>
</dbReference>
<dbReference type="InterPro" id="IPR035686">
    <property type="entry name" value="CPSase_GATase1"/>
</dbReference>
<dbReference type="InterPro" id="IPR017926">
    <property type="entry name" value="GATASE"/>
</dbReference>
<dbReference type="NCBIfam" id="TIGR01368">
    <property type="entry name" value="CPSaseIIsmall"/>
    <property type="match status" value="1"/>
</dbReference>
<dbReference type="NCBIfam" id="NF009475">
    <property type="entry name" value="PRK12838.1"/>
    <property type="match status" value="1"/>
</dbReference>
<dbReference type="PANTHER" id="PTHR11405:SF4">
    <property type="entry name" value="CARBAMOYL-PHOSPHATE SYNTHASE ARGININE-SPECIFIC SMALL CHAIN"/>
    <property type="match status" value="1"/>
</dbReference>
<dbReference type="PANTHER" id="PTHR11405">
    <property type="entry name" value="CARBAMOYLTRANSFERASE FAMILY MEMBER"/>
    <property type="match status" value="1"/>
</dbReference>
<dbReference type="Pfam" id="PF00988">
    <property type="entry name" value="CPSase_sm_chain"/>
    <property type="match status" value="1"/>
</dbReference>
<dbReference type="Pfam" id="PF00117">
    <property type="entry name" value="GATase"/>
    <property type="match status" value="1"/>
</dbReference>
<dbReference type="PRINTS" id="PR00097">
    <property type="entry name" value="ANTSNTHASEII"/>
</dbReference>
<dbReference type="PRINTS" id="PR00099">
    <property type="entry name" value="CPSGATASE"/>
</dbReference>
<dbReference type="PRINTS" id="PR00096">
    <property type="entry name" value="GATASE"/>
</dbReference>
<dbReference type="SMART" id="SM01097">
    <property type="entry name" value="CPSase_sm_chain"/>
    <property type="match status" value="1"/>
</dbReference>
<dbReference type="SUPFAM" id="SSF52021">
    <property type="entry name" value="Carbamoyl phosphate synthetase, small subunit N-terminal domain"/>
    <property type="match status" value="1"/>
</dbReference>
<dbReference type="SUPFAM" id="SSF52317">
    <property type="entry name" value="Class I glutamine amidotransferase-like"/>
    <property type="match status" value="1"/>
</dbReference>
<dbReference type="PROSITE" id="PS51273">
    <property type="entry name" value="GATASE_TYPE_1"/>
    <property type="match status" value="1"/>
</dbReference>
<comment type="function">
    <text evidence="1">Small subunit of the arginine-specific carbamoyl phosphate synthase (CPSase). CPSase catalyzes the formation of carbamoyl phosphate from the ammonia moiety of glutamine, carbonate, and phosphate donated by ATP, the first step of the arginine biosynthetic pathway. The small subunit (glutamine amidotransferase) binds and cleaves glutamine to supply the large subunit with the substrate ammonia.</text>
</comment>
<comment type="catalytic activity">
    <reaction evidence="1">
        <text>hydrogencarbonate + L-glutamine + 2 ATP + H2O = carbamoyl phosphate + L-glutamate + 2 ADP + phosphate + 2 H(+)</text>
        <dbReference type="Rhea" id="RHEA:18633"/>
        <dbReference type="ChEBI" id="CHEBI:15377"/>
        <dbReference type="ChEBI" id="CHEBI:15378"/>
        <dbReference type="ChEBI" id="CHEBI:17544"/>
        <dbReference type="ChEBI" id="CHEBI:29985"/>
        <dbReference type="ChEBI" id="CHEBI:30616"/>
        <dbReference type="ChEBI" id="CHEBI:43474"/>
        <dbReference type="ChEBI" id="CHEBI:58228"/>
        <dbReference type="ChEBI" id="CHEBI:58359"/>
        <dbReference type="ChEBI" id="CHEBI:456216"/>
        <dbReference type="EC" id="6.3.5.5"/>
    </reaction>
</comment>
<comment type="catalytic activity">
    <molecule>Carbamoyl phosphate synthase arginine-specific small chain</molecule>
    <reaction evidence="1">
        <text>L-glutamine + H2O = L-glutamate + NH4(+)</text>
        <dbReference type="Rhea" id="RHEA:15889"/>
        <dbReference type="ChEBI" id="CHEBI:15377"/>
        <dbReference type="ChEBI" id="CHEBI:28938"/>
        <dbReference type="ChEBI" id="CHEBI:29985"/>
        <dbReference type="ChEBI" id="CHEBI:58359"/>
    </reaction>
</comment>
<comment type="pathway">
    <text evidence="1">Amino-acid biosynthesis; L-arginine biosynthesis; carbamoyl phosphate from bicarbonate: step 1/1.</text>
</comment>
<comment type="subunit">
    <text evidence="1">Heterodimer composed of 2 chains; the small (or glutamine) chain promotes the hydrolysis of glutamine to ammonia, which is used by the large (or ammonia) chain to synthesize carbamoyl phosphate.</text>
</comment>
<comment type="subcellular location">
    <subcellularLocation>
        <location evidence="1">Mitochondrion matrix</location>
    </subcellularLocation>
</comment>
<comment type="similarity">
    <text evidence="4">Belongs to the CarA family.</text>
</comment>
<comment type="sequence caution" evidence="4">
    <conflict type="erroneous gene model prediction">
        <sequence resource="EMBL-CDS" id="EAA63928"/>
    </conflict>
</comment>
<reference key="1">
    <citation type="journal article" date="2005" name="Nature">
        <title>Sequencing of Aspergillus nidulans and comparative analysis with A. fumigatus and A. oryzae.</title>
        <authorList>
            <person name="Galagan J.E."/>
            <person name="Calvo S.E."/>
            <person name="Cuomo C."/>
            <person name="Ma L.-J."/>
            <person name="Wortman J.R."/>
            <person name="Batzoglou S."/>
            <person name="Lee S.-I."/>
            <person name="Bastuerkmen M."/>
            <person name="Spevak C.C."/>
            <person name="Clutterbuck J."/>
            <person name="Kapitonov V."/>
            <person name="Jurka J."/>
            <person name="Scazzocchio C."/>
            <person name="Farman M.L."/>
            <person name="Butler J."/>
            <person name="Purcell S."/>
            <person name="Harris S."/>
            <person name="Braus G.H."/>
            <person name="Draht O."/>
            <person name="Busch S."/>
            <person name="D'Enfert C."/>
            <person name="Bouchier C."/>
            <person name="Goldman G.H."/>
            <person name="Bell-Pedersen D."/>
            <person name="Griffiths-Jones S."/>
            <person name="Doonan J.H."/>
            <person name="Yu J."/>
            <person name="Vienken K."/>
            <person name="Pain A."/>
            <person name="Freitag M."/>
            <person name="Selker E.U."/>
            <person name="Archer D.B."/>
            <person name="Penalva M.A."/>
            <person name="Oakley B.R."/>
            <person name="Momany M."/>
            <person name="Tanaka T."/>
            <person name="Kumagai T."/>
            <person name="Asai K."/>
            <person name="Machida M."/>
            <person name="Nierman W.C."/>
            <person name="Denning D.W."/>
            <person name="Caddick M.X."/>
            <person name="Hynes M."/>
            <person name="Paoletti M."/>
            <person name="Fischer R."/>
            <person name="Miller B.L."/>
            <person name="Dyer P.S."/>
            <person name="Sachs M.S."/>
            <person name="Osmani S.A."/>
            <person name="Birren B.W."/>
        </authorList>
    </citation>
    <scope>NUCLEOTIDE SEQUENCE [LARGE SCALE GENOMIC DNA]</scope>
    <source>
        <strain>FGSC A4 / ATCC 38163 / CBS 112.46 / NRRL 194 / M139</strain>
    </source>
</reference>
<reference key="2">
    <citation type="journal article" date="2009" name="Fungal Genet. Biol.">
        <title>The 2008 update of the Aspergillus nidulans genome annotation: a community effort.</title>
        <authorList>
            <person name="Wortman J.R."/>
            <person name="Gilsenan J.M."/>
            <person name="Joardar V."/>
            <person name="Deegan J."/>
            <person name="Clutterbuck J."/>
            <person name="Andersen M.R."/>
            <person name="Archer D."/>
            <person name="Bencina M."/>
            <person name="Braus G."/>
            <person name="Coutinho P."/>
            <person name="von Dohren H."/>
            <person name="Doonan J."/>
            <person name="Driessen A.J."/>
            <person name="Durek P."/>
            <person name="Espeso E."/>
            <person name="Fekete E."/>
            <person name="Flipphi M."/>
            <person name="Estrada C.G."/>
            <person name="Geysens S."/>
            <person name="Goldman G."/>
            <person name="de Groot P.W."/>
            <person name="Hansen K."/>
            <person name="Harris S.D."/>
            <person name="Heinekamp T."/>
            <person name="Helmstaedt K."/>
            <person name="Henrissat B."/>
            <person name="Hofmann G."/>
            <person name="Homan T."/>
            <person name="Horio T."/>
            <person name="Horiuchi H."/>
            <person name="James S."/>
            <person name="Jones M."/>
            <person name="Karaffa L."/>
            <person name="Karanyi Z."/>
            <person name="Kato M."/>
            <person name="Keller N."/>
            <person name="Kelly D.E."/>
            <person name="Kiel J.A."/>
            <person name="Kim J.M."/>
            <person name="van der Klei I.J."/>
            <person name="Klis F.M."/>
            <person name="Kovalchuk A."/>
            <person name="Krasevec N."/>
            <person name="Kubicek C.P."/>
            <person name="Liu B."/>
            <person name="Maccabe A."/>
            <person name="Meyer V."/>
            <person name="Mirabito P."/>
            <person name="Miskei M."/>
            <person name="Mos M."/>
            <person name="Mullins J."/>
            <person name="Nelson D.R."/>
            <person name="Nielsen J."/>
            <person name="Oakley B.R."/>
            <person name="Osmani S.A."/>
            <person name="Pakula T."/>
            <person name="Paszewski A."/>
            <person name="Paulsen I."/>
            <person name="Pilsyk S."/>
            <person name="Pocsi I."/>
            <person name="Punt P.J."/>
            <person name="Ram A.F."/>
            <person name="Ren Q."/>
            <person name="Robellet X."/>
            <person name="Robson G."/>
            <person name="Seiboth B."/>
            <person name="van Solingen P."/>
            <person name="Specht T."/>
            <person name="Sun J."/>
            <person name="Taheri-Talesh N."/>
            <person name="Takeshita N."/>
            <person name="Ussery D."/>
            <person name="vanKuyk P.A."/>
            <person name="Visser H."/>
            <person name="van de Vondervoort P.J."/>
            <person name="de Vries R.P."/>
            <person name="Walton J."/>
            <person name="Xiang X."/>
            <person name="Xiong Y."/>
            <person name="Zeng A.P."/>
            <person name="Brandt B.W."/>
            <person name="Cornell M.J."/>
            <person name="van den Hondel C.A."/>
            <person name="Visser J."/>
            <person name="Oliver S.G."/>
            <person name="Turner G."/>
        </authorList>
    </citation>
    <scope>GENOME REANNOTATION</scope>
    <source>
        <strain>FGSC A4 / ATCC 38163 / CBS 112.46 / NRRL 194 / M139</strain>
    </source>
</reference>
<reference key="3">
    <citation type="submission" date="1998-03" db="EMBL/GenBank/DDBJ databases">
        <title>A CPA-like gene from Aspergillus nidulans.</title>
        <authorList>
            <person name="Doonan J."/>
        </authorList>
    </citation>
    <scope>NUCLEOTIDE SEQUENCE [MRNA] OF 1-304</scope>
</reference>
<organism>
    <name type="scientific">Emericella nidulans (strain FGSC A4 / ATCC 38163 / CBS 112.46 / NRRL 194 / M139)</name>
    <name type="common">Aspergillus nidulans</name>
    <dbReference type="NCBI Taxonomy" id="227321"/>
    <lineage>
        <taxon>Eukaryota</taxon>
        <taxon>Fungi</taxon>
        <taxon>Dikarya</taxon>
        <taxon>Ascomycota</taxon>
        <taxon>Pezizomycotina</taxon>
        <taxon>Eurotiomycetes</taxon>
        <taxon>Eurotiomycetidae</taxon>
        <taxon>Eurotiales</taxon>
        <taxon>Aspergillaceae</taxon>
        <taxon>Aspergillus</taxon>
        <taxon>Aspergillus subgen. Nidulantes</taxon>
    </lineage>
</organism>
<feature type="transit peptide" description="Mitochondrion" evidence="2">
    <location>
        <begin position="1"/>
        <end position="29"/>
    </location>
</feature>
<feature type="chain" id="PRO_0000290595" description="Carbamoyl phosphate synthase arginine-specific small chain" evidence="2">
    <location>
        <begin position="30"/>
        <end position="454"/>
    </location>
</feature>
<feature type="domain" description="Glutamine amidotransferase type-1" evidence="3">
    <location>
        <begin position="219"/>
        <end position="406"/>
    </location>
</feature>
<feature type="active site" description="Nucleophile" evidence="3">
    <location>
        <position position="295"/>
    </location>
</feature>
<feature type="active site" evidence="3">
    <location>
        <position position="379"/>
    </location>
</feature>
<feature type="active site" evidence="3">
    <location>
        <position position="381"/>
    </location>
</feature>
<feature type="sequence conflict" description="In Ref. 3; CAA11831." evidence="4" ref="3">
    <original>A</original>
    <variation>P</variation>
    <location>
        <position position="14"/>
    </location>
</feature>
<accession>Q5BB37</accession>
<accession>C8VMT6</accession>
<accession>O42806</accession>